<organism>
    <name type="scientific">Tropheryma whipplei (strain Twist)</name>
    <name type="common">Whipple's bacillus</name>
    <dbReference type="NCBI Taxonomy" id="203267"/>
    <lineage>
        <taxon>Bacteria</taxon>
        <taxon>Bacillati</taxon>
        <taxon>Actinomycetota</taxon>
        <taxon>Actinomycetes</taxon>
        <taxon>Micrococcales</taxon>
        <taxon>Tropherymataceae</taxon>
        <taxon>Tropheryma</taxon>
    </lineage>
</organism>
<keyword id="KW-0067">ATP-binding</keyword>
<keyword id="KW-0418">Kinase</keyword>
<keyword id="KW-0545">Nucleotide biosynthesis</keyword>
<keyword id="KW-0547">Nucleotide-binding</keyword>
<keyword id="KW-1185">Reference proteome</keyword>
<keyword id="KW-0808">Transferase</keyword>
<feature type="chain" id="PRO_0000155365" description="Thymidylate kinase">
    <location>
        <begin position="1"/>
        <end position="199"/>
    </location>
</feature>
<feature type="binding site" evidence="1">
    <location>
        <begin position="7"/>
        <end position="14"/>
    </location>
    <ligand>
        <name>ATP</name>
        <dbReference type="ChEBI" id="CHEBI:30616"/>
    </ligand>
</feature>
<comment type="function">
    <text evidence="1">Phosphorylation of dTMP to form dTDP in both de novo and salvage pathways of dTTP synthesis.</text>
</comment>
<comment type="catalytic activity">
    <reaction evidence="1">
        <text>dTMP + ATP = dTDP + ADP</text>
        <dbReference type="Rhea" id="RHEA:13517"/>
        <dbReference type="ChEBI" id="CHEBI:30616"/>
        <dbReference type="ChEBI" id="CHEBI:58369"/>
        <dbReference type="ChEBI" id="CHEBI:63528"/>
        <dbReference type="ChEBI" id="CHEBI:456216"/>
        <dbReference type="EC" id="2.7.4.9"/>
    </reaction>
</comment>
<comment type="similarity">
    <text evidence="1">Belongs to the thymidylate kinase family.</text>
</comment>
<name>KTHY_TROWT</name>
<protein>
    <recommendedName>
        <fullName evidence="1">Thymidylate kinase</fullName>
        <ecNumber evidence="1">2.7.4.9</ecNumber>
    </recommendedName>
    <alternativeName>
        <fullName evidence="1">dTMP kinase</fullName>
    </alternativeName>
</protein>
<sequence>MFVTFEGIDGSGKTAQLTAAGEFLKASGKQVVLTREPGTISCIRDYVLASDMDIRTEALLYSADRAENIAKNVIPALNAGKVVLQDRYLDSFLAYQLADNKLVETDIMRLFEFSSQGLRPDLTLLFDLTPACAQERLENRDRIERKPIDFHSKVRNIYLKLSADNTDRIRVIDASQSFSKIHQQVIYHIERKLGGTHSA</sequence>
<proteinExistence type="inferred from homology"/>
<accession>Q83FM3</accession>
<evidence type="ECO:0000255" key="1">
    <source>
        <dbReference type="HAMAP-Rule" id="MF_00165"/>
    </source>
</evidence>
<gene>
    <name evidence="1" type="primary">tmk</name>
    <name type="ordered locus">TWT_695</name>
</gene>
<dbReference type="EC" id="2.7.4.9" evidence="1"/>
<dbReference type="EMBL" id="AE014184">
    <property type="protein sequence ID" value="AAO44792.1"/>
    <property type="molecule type" value="Genomic_DNA"/>
</dbReference>
<dbReference type="RefSeq" id="WP_011096651.1">
    <property type="nucleotide sequence ID" value="NC_004572.3"/>
</dbReference>
<dbReference type="SMR" id="Q83FM3"/>
<dbReference type="STRING" id="203267.TWT_695"/>
<dbReference type="GeneID" id="67388490"/>
<dbReference type="KEGG" id="twh:TWT_695"/>
<dbReference type="eggNOG" id="COG0125">
    <property type="taxonomic scope" value="Bacteria"/>
</dbReference>
<dbReference type="HOGENOM" id="CLU_049131_0_2_11"/>
<dbReference type="OrthoDB" id="9774907at2"/>
<dbReference type="Proteomes" id="UP000002200">
    <property type="component" value="Chromosome"/>
</dbReference>
<dbReference type="GO" id="GO:0005829">
    <property type="term" value="C:cytosol"/>
    <property type="evidence" value="ECO:0007669"/>
    <property type="project" value="TreeGrafter"/>
</dbReference>
<dbReference type="GO" id="GO:0005524">
    <property type="term" value="F:ATP binding"/>
    <property type="evidence" value="ECO:0007669"/>
    <property type="project" value="UniProtKB-UniRule"/>
</dbReference>
<dbReference type="GO" id="GO:0004798">
    <property type="term" value="F:dTMP kinase activity"/>
    <property type="evidence" value="ECO:0007669"/>
    <property type="project" value="UniProtKB-UniRule"/>
</dbReference>
<dbReference type="GO" id="GO:0006233">
    <property type="term" value="P:dTDP biosynthetic process"/>
    <property type="evidence" value="ECO:0007669"/>
    <property type="project" value="InterPro"/>
</dbReference>
<dbReference type="GO" id="GO:0006235">
    <property type="term" value="P:dTTP biosynthetic process"/>
    <property type="evidence" value="ECO:0007669"/>
    <property type="project" value="UniProtKB-UniRule"/>
</dbReference>
<dbReference type="GO" id="GO:0006227">
    <property type="term" value="P:dUDP biosynthetic process"/>
    <property type="evidence" value="ECO:0007669"/>
    <property type="project" value="TreeGrafter"/>
</dbReference>
<dbReference type="CDD" id="cd01672">
    <property type="entry name" value="TMPK"/>
    <property type="match status" value="1"/>
</dbReference>
<dbReference type="FunFam" id="3.40.50.300:FF:000225">
    <property type="entry name" value="Thymidylate kinase"/>
    <property type="match status" value="1"/>
</dbReference>
<dbReference type="Gene3D" id="3.40.50.300">
    <property type="entry name" value="P-loop containing nucleotide triphosphate hydrolases"/>
    <property type="match status" value="1"/>
</dbReference>
<dbReference type="HAMAP" id="MF_00165">
    <property type="entry name" value="Thymidylate_kinase"/>
    <property type="match status" value="1"/>
</dbReference>
<dbReference type="InterPro" id="IPR027417">
    <property type="entry name" value="P-loop_NTPase"/>
</dbReference>
<dbReference type="InterPro" id="IPR039430">
    <property type="entry name" value="Thymidylate_kin-like_dom"/>
</dbReference>
<dbReference type="InterPro" id="IPR018094">
    <property type="entry name" value="Thymidylate_kinase"/>
</dbReference>
<dbReference type="NCBIfam" id="TIGR00041">
    <property type="entry name" value="DTMP_kinase"/>
    <property type="match status" value="1"/>
</dbReference>
<dbReference type="PANTHER" id="PTHR10344">
    <property type="entry name" value="THYMIDYLATE KINASE"/>
    <property type="match status" value="1"/>
</dbReference>
<dbReference type="PANTHER" id="PTHR10344:SF4">
    <property type="entry name" value="UMP-CMP KINASE 2, MITOCHONDRIAL"/>
    <property type="match status" value="1"/>
</dbReference>
<dbReference type="Pfam" id="PF02223">
    <property type="entry name" value="Thymidylate_kin"/>
    <property type="match status" value="1"/>
</dbReference>
<dbReference type="SUPFAM" id="SSF52540">
    <property type="entry name" value="P-loop containing nucleoside triphosphate hydrolases"/>
    <property type="match status" value="1"/>
</dbReference>
<reference key="1">
    <citation type="journal article" date="2003" name="Genome Res.">
        <title>Tropheryma whipplei twist: a human pathogenic Actinobacteria with a reduced genome.</title>
        <authorList>
            <person name="Raoult D."/>
            <person name="Ogata H."/>
            <person name="Audic S."/>
            <person name="Robert C."/>
            <person name="Suhre K."/>
            <person name="Drancourt M."/>
            <person name="Claverie J.-M."/>
        </authorList>
    </citation>
    <scope>NUCLEOTIDE SEQUENCE [LARGE SCALE GENOMIC DNA]</scope>
    <source>
        <strain>Twist</strain>
    </source>
</reference>